<organism>
    <name type="scientific">Methylobacterium nodulans (strain LMG 21967 / CNCM I-2342 / ORS 2060)</name>
    <dbReference type="NCBI Taxonomy" id="460265"/>
    <lineage>
        <taxon>Bacteria</taxon>
        <taxon>Pseudomonadati</taxon>
        <taxon>Pseudomonadota</taxon>
        <taxon>Alphaproteobacteria</taxon>
        <taxon>Hyphomicrobiales</taxon>
        <taxon>Methylobacteriaceae</taxon>
        <taxon>Methylobacterium</taxon>
    </lineage>
</organism>
<gene>
    <name evidence="1" type="primary">ndk</name>
    <name type="ordered locus">Mnod_4923</name>
</gene>
<keyword id="KW-0067">ATP-binding</keyword>
<keyword id="KW-0963">Cytoplasm</keyword>
<keyword id="KW-0418">Kinase</keyword>
<keyword id="KW-0460">Magnesium</keyword>
<keyword id="KW-0479">Metal-binding</keyword>
<keyword id="KW-0546">Nucleotide metabolism</keyword>
<keyword id="KW-0547">Nucleotide-binding</keyword>
<keyword id="KW-0597">Phosphoprotein</keyword>
<keyword id="KW-1185">Reference proteome</keyword>
<keyword id="KW-0808">Transferase</keyword>
<sequence>MAIERTFSILKPDATARNLTGAINAVIEEAGLRIVAQRRIRMSEAQAKTFYEVHAERPFYGELVSFMTSGPVVVQVLEGENAVAKYREVMGATNPAQAAEGTIRKKFALSVGENSVHGSDSAENAKVEIAQFFDEKDIVG</sequence>
<reference key="1">
    <citation type="submission" date="2009-01" db="EMBL/GenBank/DDBJ databases">
        <title>Complete sequence of chromosome of Methylobacterium nodulans ORS 2060.</title>
        <authorList>
            <consortium name="US DOE Joint Genome Institute"/>
            <person name="Lucas S."/>
            <person name="Copeland A."/>
            <person name="Lapidus A."/>
            <person name="Glavina del Rio T."/>
            <person name="Dalin E."/>
            <person name="Tice H."/>
            <person name="Bruce D."/>
            <person name="Goodwin L."/>
            <person name="Pitluck S."/>
            <person name="Sims D."/>
            <person name="Brettin T."/>
            <person name="Detter J.C."/>
            <person name="Han C."/>
            <person name="Larimer F."/>
            <person name="Land M."/>
            <person name="Hauser L."/>
            <person name="Kyrpides N."/>
            <person name="Ivanova N."/>
            <person name="Marx C.J."/>
            <person name="Richardson P."/>
        </authorList>
    </citation>
    <scope>NUCLEOTIDE SEQUENCE [LARGE SCALE GENOMIC DNA]</scope>
    <source>
        <strain>LMG 21967 / CNCM I-2342 / ORS 2060</strain>
    </source>
</reference>
<proteinExistence type="inferred from homology"/>
<feature type="chain" id="PRO_1000135263" description="Nucleoside diphosphate kinase">
    <location>
        <begin position="1"/>
        <end position="140"/>
    </location>
</feature>
<feature type="active site" description="Pros-phosphohistidine intermediate" evidence="1">
    <location>
        <position position="117"/>
    </location>
</feature>
<feature type="binding site" evidence="1">
    <location>
        <position position="11"/>
    </location>
    <ligand>
        <name>ATP</name>
        <dbReference type="ChEBI" id="CHEBI:30616"/>
    </ligand>
</feature>
<feature type="binding site" evidence="1">
    <location>
        <position position="59"/>
    </location>
    <ligand>
        <name>ATP</name>
        <dbReference type="ChEBI" id="CHEBI:30616"/>
    </ligand>
</feature>
<feature type="binding site" evidence="1">
    <location>
        <position position="87"/>
    </location>
    <ligand>
        <name>ATP</name>
        <dbReference type="ChEBI" id="CHEBI:30616"/>
    </ligand>
</feature>
<feature type="binding site" evidence="1">
    <location>
        <position position="93"/>
    </location>
    <ligand>
        <name>ATP</name>
        <dbReference type="ChEBI" id="CHEBI:30616"/>
    </ligand>
</feature>
<feature type="binding site" evidence="1">
    <location>
        <position position="104"/>
    </location>
    <ligand>
        <name>ATP</name>
        <dbReference type="ChEBI" id="CHEBI:30616"/>
    </ligand>
</feature>
<feature type="binding site" evidence="1">
    <location>
        <position position="114"/>
    </location>
    <ligand>
        <name>ATP</name>
        <dbReference type="ChEBI" id="CHEBI:30616"/>
    </ligand>
</feature>
<accession>B8IH88</accession>
<dbReference type="EC" id="2.7.4.6" evidence="1"/>
<dbReference type="EMBL" id="CP001349">
    <property type="protein sequence ID" value="ACL59780.1"/>
    <property type="molecule type" value="Genomic_DNA"/>
</dbReference>
<dbReference type="RefSeq" id="WP_015931409.1">
    <property type="nucleotide sequence ID" value="NC_011894.1"/>
</dbReference>
<dbReference type="SMR" id="B8IH88"/>
<dbReference type="STRING" id="460265.Mnod_4923"/>
<dbReference type="KEGG" id="mno:Mnod_4923"/>
<dbReference type="eggNOG" id="COG0105">
    <property type="taxonomic scope" value="Bacteria"/>
</dbReference>
<dbReference type="HOGENOM" id="CLU_060216_8_1_5"/>
<dbReference type="OrthoDB" id="9801161at2"/>
<dbReference type="Proteomes" id="UP000008207">
    <property type="component" value="Chromosome"/>
</dbReference>
<dbReference type="GO" id="GO:0005737">
    <property type="term" value="C:cytoplasm"/>
    <property type="evidence" value="ECO:0007669"/>
    <property type="project" value="UniProtKB-SubCell"/>
</dbReference>
<dbReference type="GO" id="GO:0005524">
    <property type="term" value="F:ATP binding"/>
    <property type="evidence" value="ECO:0007669"/>
    <property type="project" value="UniProtKB-UniRule"/>
</dbReference>
<dbReference type="GO" id="GO:0046872">
    <property type="term" value="F:metal ion binding"/>
    <property type="evidence" value="ECO:0007669"/>
    <property type="project" value="UniProtKB-KW"/>
</dbReference>
<dbReference type="GO" id="GO:0004550">
    <property type="term" value="F:nucleoside diphosphate kinase activity"/>
    <property type="evidence" value="ECO:0007669"/>
    <property type="project" value="UniProtKB-UniRule"/>
</dbReference>
<dbReference type="GO" id="GO:0006241">
    <property type="term" value="P:CTP biosynthetic process"/>
    <property type="evidence" value="ECO:0007669"/>
    <property type="project" value="UniProtKB-UniRule"/>
</dbReference>
<dbReference type="GO" id="GO:0006183">
    <property type="term" value="P:GTP biosynthetic process"/>
    <property type="evidence" value="ECO:0007669"/>
    <property type="project" value="UniProtKB-UniRule"/>
</dbReference>
<dbReference type="GO" id="GO:0006228">
    <property type="term" value="P:UTP biosynthetic process"/>
    <property type="evidence" value="ECO:0007669"/>
    <property type="project" value="UniProtKB-UniRule"/>
</dbReference>
<dbReference type="CDD" id="cd04413">
    <property type="entry name" value="NDPk_I"/>
    <property type="match status" value="1"/>
</dbReference>
<dbReference type="FunFam" id="3.30.70.141:FF:000003">
    <property type="entry name" value="Nucleoside diphosphate kinase"/>
    <property type="match status" value="1"/>
</dbReference>
<dbReference type="Gene3D" id="3.30.70.141">
    <property type="entry name" value="Nucleoside diphosphate kinase-like domain"/>
    <property type="match status" value="1"/>
</dbReference>
<dbReference type="HAMAP" id="MF_00451">
    <property type="entry name" value="NDP_kinase"/>
    <property type="match status" value="1"/>
</dbReference>
<dbReference type="InterPro" id="IPR034907">
    <property type="entry name" value="NDK-like_dom"/>
</dbReference>
<dbReference type="InterPro" id="IPR036850">
    <property type="entry name" value="NDK-like_dom_sf"/>
</dbReference>
<dbReference type="InterPro" id="IPR001564">
    <property type="entry name" value="Nucleoside_diP_kinase"/>
</dbReference>
<dbReference type="NCBIfam" id="NF001908">
    <property type="entry name" value="PRK00668.1"/>
    <property type="match status" value="1"/>
</dbReference>
<dbReference type="PANTHER" id="PTHR46161">
    <property type="entry name" value="NUCLEOSIDE DIPHOSPHATE KINASE"/>
    <property type="match status" value="1"/>
</dbReference>
<dbReference type="PANTHER" id="PTHR46161:SF3">
    <property type="entry name" value="NUCLEOSIDE DIPHOSPHATE KINASE DDB_G0292928-RELATED"/>
    <property type="match status" value="1"/>
</dbReference>
<dbReference type="Pfam" id="PF00334">
    <property type="entry name" value="NDK"/>
    <property type="match status" value="1"/>
</dbReference>
<dbReference type="PRINTS" id="PR01243">
    <property type="entry name" value="NUCDPKINASE"/>
</dbReference>
<dbReference type="SMART" id="SM00562">
    <property type="entry name" value="NDK"/>
    <property type="match status" value="1"/>
</dbReference>
<dbReference type="SUPFAM" id="SSF54919">
    <property type="entry name" value="Nucleoside diphosphate kinase, NDK"/>
    <property type="match status" value="1"/>
</dbReference>
<dbReference type="PROSITE" id="PS51374">
    <property type="entry name" value="NDPK_LIKE"/>
    <property type="match status" value="1"/>
</dbReference>
<evidence type="ECO:0000255" key="1">
    <source>
        <dbReference type="HAMAP-Rule" id="MF_00451"/>
    </source>
</evidence>
<name>NDK_METNO</name>
<protein>
    <recommendedName>
        <fullName evidence="1">Nucleoside diphosphate kinase</fullName>
        <shortName evidence="1">NDK</shortName>
        <shortName evidence="1">NDP kinase</shortName>
        <ecNumber evidence="1">2.7.4.6</ecNumber>
    </recommendedName>
    <alternativeName>
        <fullName evidence="1">Nucleoside-2-P kinase</fullName>
    </alternativeName>
</protein>
<comment type="function">
    <text evidence="1">Major role in the synthesis of nucleoside triphosphates other than ATP. The ATP gamma phosphate is transferred to the NDP beta phosphate via a ping-pong mechanism, using a phosphorylated active-site intermediate.</text>
</comment>
<comment type="catalytic activity">
    <reaction evidence="1">
        <text>a 2'-deoxyribonucleoside 5'-diphosphate + ATP = a 2'-deoxyribonucleoside 5'-triphosphate + ADP</text>
        <dbReference type="Rhea" id="RHEA:44640"/>
        <dbReference type="ChEBI" id="CHEBI:30616"/>
        <dbReference type="ChEBI" id="CHEBI:61560"/>
        <dbReference type="ChEBI" id="CHEBI:73316"/>
        <dbReference type="ChEBI" id="CHEBI:456216"/>
        <dbReference type="EC" id="2.7.4.6"/>
    </reaction>
</comment>
<comment type="catalytic activity">
    <reaction evidence="1">
        <text>a ribonucleoside 5'-diphosphate + ATP = a ribonucleoside 5'-triphosphate + ADP</text>
        <dbReference type="Rhea" id="RHEA:18113"/>
        <dbReference type="ChEBI" id="CHEBI:30616"/>
        <dbReference type="ChEBI" id="CHEBI:57930"/>
        <dbReference type="ChEBI" id="CHEBI:61557"/>
        <dbReference type="ChEBI" id="CHEBI:456216"/>
        <dbReference type="EC" id="2.7.4.6"/>
    </reaction>
</comment>
<comment type="cofactor">
    <cofactor evidence="1">
        <name>Mg(2+)</name>
        <dbReference type="ChEBI" id="CHEBI:18420"/>
    </cofactor>
</comment>
<comment type="subunit">
    <text evidence="1">Homotetramer.</text>
</comment>
<comment type="subcellular location">
    <subcellularLocation>
        <location evidence="1">Cytoplasm</location>
    </subcellularLocation>
</comment>
<comment type="similarity">
    <text evidence="1">Belongs to the NDK family.</text>
</comment>